<proteinExistence type="evidence at protein level"/>
<gene>
    <name type="primary">Crmp1</name>
    <name type="synonym">Dpysl1</name>
    <name type="synonym">Ulip3</name>
</gene>
<sequence>MSHQGKKSIPHITSDRLLIRGGRIINDDQSFYADVYLEDGLIKQIGENLIVPGGVKTIEANGRMVIPGGIDVNTYLQKPSQGMTSADDFFQGTKAALAGGTTMIIDHVVPEPGSSLLTSFEKWHEAADTKSCCDYSLHVDITSWYDGVREELEVLVQDKGVNSFQVYMAYKDLYQMSDSQLYEAFTFLKGLGAVILVHAENGDLIAQEQKRILEMGITGPEGHALSRPEELEAEAVFRAIAIAGRINCPVYITKVMSKSAADIIALARKKGPLVFGEPIAASLGTDGTHYWSKNWAKAAAFVTSPPLSPDPTTPDYLTSLLACGDLQVTGSGHCPYSTAQKAVGKDNFTLIPEGVNGIEERMTVVWDKAVATGKMDENQFVAVTSTNAAKIFNLYPRKGRIAVGSDADVVIWDPDKMKTITAKSHKSTVEYNIFEGMECHGSPLVVISQGKIVFEDGNISVSKGMGRFIPRKPFPEHLYQRVRIRSKVFGLHSVSRGMYDGPVYEVPATPKHAAPAPSAKSSPSKHQPPPIRNLHQSNFSLSGAQIDDNNPRRTGHRIVAPPGGRSNITSLG</sequence>
<organism>
    <name type="scientific">Mus musculus</name>
    <name type="common">Mouse</name>
    <dbReference type="NCBI Taxonomy" id="10090"/>
    <lineage>
        <taxon>Eukaryota</taxon>
        <taxon>Metazoa</taxon>
        <taxon>Chordata</taxon>
        <taxon>Craniata</taxon>
        <taxon>Vertebrata</taxon>
        <taxon>Euteleostomi</taxon>
        <taxon>Mammalia</taxon>
        <taxon>Eutheria</taxon>
        <taxon>Euarchontoglires</taxon>
        <taxon>Glires</taxon>
        <taxon>Rodentia</taxon>
        <taxon>Myomorpha</taxon>
        <taxon>Muroidea</taxon>
        <taxon>Muridae</taxon>
        <taxon>Murinae</taxon>
        <taxon>Mus</taxon>
        <taxon>Mus</taxon>
    </lineage>
</organism>
<protein>
    <recommendedName>
        <fullName>Dihydropyrimidinase-related protein 1</fullName>
        <shortName>DRP-1</shortName>
    </recommendedName>
    <alternativeName>
        <fullName>Collapsin response mediator protein 1</fullName>
        <shortName>CRMP-1</shortName>
    </alternativeName>
    <alternativeName>
        <fullName evidence="7">Inactive dihydropyrimidinase</fullName>
    </alternativeName>
    <alternativeName>
        <fullName>Unc-33-like phosphoprotein 3</fullName>
        <shortName>ULIP-3</shortName>
    </alternativeName>
</protein>
<dbReference type="EMBL" id="U72875">
    <property type="protein sequence ID" value="AAB39703.1"/>
    <property type="molecule type" value="mRNA"/>
</dbReference>
<dbReference type="EMBL" id="Y09080">
    <property type="protein sequence ID" value="CAA70300.1"/>
    <property type="molecule type" value="mRNA"/>
</dbReference>
<dbReference type="EMBL" id="AB006714">
    <property type="protein sequence ID" value="BAA21887.1"/>
    <property type="molecule type" value="mRNA"/>
</dbReference>
<dbReference type="EMBL" id="BC031738">
    <property type="protein sequence ID" value="AAH31738.1"/>
    <property type="molecule type" value="mRNA"/>
</dbReference>
<dbReference type="CCDS" id="CCDS39075.1"/>
<dbReference type="RefSeq" id="NP_031791.3">
    <property type="nucleotide sequence ID" value="NM_007765.4"/>
</dbReference>
<dbReference type="PDB" id="1KCX">
    <property type="method" value="X-ray"/>
    <property type="resolution" value="2.12 A"/>
    <property type="chains" value="A/B=8-525"/>
</dbReference>
<dbReference type="PDBsum" id="1KCX"/>
<dbReference type="SMR" id="P97427"/>
<dbReference type="BioGRID" id="198890">
    <property type="interactions" value="32"/>
</dbReference>
<dbReference type="FunCoup" id="P97427">
    <property type="interactions" value="532"/>
</dbReference>
<dbReference type="IntAct" id="P97427">
    <property type="interactions" value="5"/>
</dbReference>
<dbReference type="MINT" id="P97427"/>
<dbReference type="STRING" id="10090.ENSMUSP00000109795"/>
<dbReference type="MEROPS" id="M38.974"/>
<dbReference type="GlyGen" id="P97427">
    <property type="glycosylation" value="5 sites, 3 N-linked glycans (3 sites), 1 O-linked glycan (2 sites)"/>
</dbReference>
<dbReference type="iPTMnet" id="P97427"/>
<dbReference type="PhosphoSitePlus" id="P97427"/>
<dbReference type="SwissPalm" id="P97427"/>
<dbReference type="jPOST" id="P97427"/>
<dbReference type="PaxDb" id="10090-ENSMUSP00000109795"/>
<dbReference type="PeptideAtlas" id="P97427"/>
<dbReference type="ProteomicsDB" id="277392"/>
<dbReference type="Antibodypedia" id="9351">
    <property type="antibodies" value="438 antibodies from 36 providers"/>
</dbReference>
<dbReference type="DNASU" id="12933"/>
<dbReference type="Ensembl" id="ENSMUST00000031004.11">
    <property type="protein sequence ID" value="ENSMUSP00000031004.8"/>
    <property type="gene ID" value="ENSMUSG00000029121.17"/>
</dbReference>
<dbReference type="GeneID" id="12933"/>
<dbReference type="KEGG" id="mmu:12933"/>
<dbReference type="UCSC" id="uc008xfm.2">
    <property type="organism name" value="mouse"/>
</dbReference>
<dbReference type="AGR" id="MGI:107793"/>
<dbReference type="CTD" id="1400"/>
<dbReference type="MGI" id="MGI:107793">
    <property type="gene designation" value="Crmp1"/>
</dbReference>
<dbReference type="VEuPathDB" id="HostDB:ENSMUSG00000029121"/>
<dbReference type="eggNOG" id="KOG2584">
    <property type="taxonomic scope" value="Eukaryota"/>
</dbReference>
<dbReference type="GeneTree" id="ENSGT01030000234527"/>
<dbReference type="HOGENOM" id="CLU_015572_2_2_1"/>
<dbReference type="InParanoid" id="P97427"/>
<dbReference type="OMA" id="AYQRINT"/>
<dbReference type="OrthoDB" id="10258955at2759"/>
<dbReference type="PhylomeDB" id="P97427"/>
<dbReference type="Reactome" id="R-MMU-399956">
    <property type="pathway name" value="CRMPs in Sema3A signaling"/>
</dbReference>
<dbReference type="BioGRID-ORCS" id="12933">
    <property type="hits" value="3 hits in 76 CRISPR screens"/>
</dbReference>
<dbReference type="CD-CODE" id="CE726F99">
    <property type="entry name" value="Postsynaptic density"/>
</dbReference>
<dbReference type="ChiTaRS" id="Crmp1">
    <property type="organism name" value="mouse"/>
</dbReference>
<dbReference type="EvolutionaryTrace" id="P97427"/>
<dbReference type="PRO" id="PR:P97427"/>
<dbReference type="Proteomes" id="UP000000589">
    <property type="component" value="Chromosome 5"/>
</dbReference>
<dbReference type="RNAct" id="P97427">
    <property type="molecule type" value="protein"/>
</dbReference>
<dbReference type="Bgee" id="ENSMUSG00000029121">
    <property type="expression patterns" value="Expressed in embryonic brain and 196 other cell types or tissues"/>
</dbReference>
<dbReference type="ExpressionAtlas" id="P97427">
    <property type="expression patterns" value="baseline and differential"/>
</dbReference>
<dbReference type="GO" id="GO:0015629">
    <property type="term" value="C:actin cytoskeleton"/>
    <property type="evidence" value="ECO:0000314"/>
    <property type="project" value="WormBase"/>
</dbReference>
<dbReference type="GO" id="GO:0005813">
    <property type="term" value="C:centrosome"/>
    <property type="evidence" value="ECO:0007669"/>
    <property type="project" value="UniProtKB-SubCell"/>
</dbReference>
<dbReference type="GO" id="GO:0005829">
    <property type="term" value="C:cytosol"/>
    <property type="evidence" value="ECO:0007669"/>
    <property type="project" value="Ensembl"/>
</dbReference>
<dbReference type="GO" id="GO:0030425">
    <property type="term" value="C:dendrite"/>
    <property type="evidence" value="ECO:0000314"/>
    <property type="project" value="MGI"/>
</dbReference>
<dbReference type="GO" id="GO:0030426">
    <property type="term" value="C:growth cone"/>
    <property type="evidence" value="ECO:0000314"/>
    <property type="project" value="WormBase"/>
</dbReference>
<dbReference type="GO" id="GO:0030496">
    <property type="term" value="C:midbody"/>
    <property type="evidence" value="ECO:0007669"/>
    <property type="project" value="Ensembl"/>
</dbReference>
<dbReference type="GO" id="GO:0043025">
    <property type="term" value="C:neuronal cell body"/>
    <property type="evidence" value="ECO:0000314"/>
    <property type="project" value="MGI"/>
</dbReference>
<dbReference type="GO" id="GO:0043204">
    <property type="term" value="C:perikaryon"/>
    <property type="evidence" value="ECO:0007669"/>
    <property type="project" value="UniProtKB-SubCell"/>
</dbReference>
<dbReference type="GO" id="GO:0098794">
    <property type="term" value="C:postsynapse"/>
    <property type="evidence" value="ECO:0000314"/>
    <property type="project" value="SynGO"/>
</dbReference>
<dbReference type="GO" id="GO:0098793">
    <property type="term" value="C:presynapse"/>
    <property type="evidence" value="ECO:0000314"/>
    <property type="project" value="SynGO"/>
</dbReference>
<dbReference type="GO" id="GO:0005819">
    <property type="term" value="C:spindle"/>
    <property type="evidence" value="ECO:0007669"/>
    <property type="project" value="UniProtKB-SubCell"/>
</dbReference>
<dbReference type="GO" id="GO:0031005">
    <property type="term" value="F:filamin binding"/>
    <property type="evidence" value="ECO:0007669"/>
    <property type="project" value="Ensembl"/>
</dbReference>
<dbReference type="GO" id="GO:0016810">
    <property type="term" value="F:hydrolase activity, acting on carbon-nitrogen (but not peptide) bonds"/>
    <property type="evidence" value="ECO:0007669"/>
    <property type="project" value="InterPro"/>
</dbReference>
<dbReference type="GO" id="GO:0042802">
    <property type="term" value="F:identical protein binding"/>
    <property type="evidence" value="ECO:0007669"/>
    <property type="project" value="Ensembl"/>
</dbReference>
<dbReference type="GO" id="GO:0051219">
    <property type="term" value="F:phosphoprotein binding"/>
    <property type="evidence" value="ECO:0000353"/>
    <property type="project" value="BHF-UCL"/>
</dbReference>
<dbReference type="GO" id="GO:0010977">
    <property type="term" value="P:negative regulation of neuron projection development"/>
    <property type="evidence" value="ECO:0007669"/>
    <property type="project" value="Ensembl"/>
</dbReference>
<dbReference type="GO" id="GO:0150052">
    <property type="term" value="P:regulation of postsynapse assembly"/>
    <property type="evidence" value="ECO:0000314"/>
    <property type="project" value="SynGO"/>
</dbReference>
<dbReference type="GO" id="GO:0071526">
    <property type="term" value="P:semaphorin-plexin signaling pathway"/>
    <property type="evidence" value="ECO:0000316"/>
    <property type="project" value="WormBase"/>
</dbReference>
<dbReference type="CDD" id="cd01314">
    <property type="entry name" value="D-HYD"/>
    <property type="match status" value="1"/>
</dbReference>
<dbReference type="DisProt" id="DP02621"/>
<dbReference type="FunFam" id="3.20.20.140:FF:000217">
    <property type="entry name" value="Dihydropyrimidinase-related protein 1"/>
    <property type="match status" value="1"/>
</dbReference>
<dbReference type="FunFam" id="2.30.40.10:FF:000021">
    <property type="entry name" value="Dihydropyrimidinase-related protein 2"/>
    <property type="match status" value="1"/>
</dbReference>
<dbReference type="Gene3D" id="3.20.20.140">
    <property type="entry name" value="Metal-dependent hydrolases"/>
    <property type="match status" value="1"/>
</dbReference>
<dbReference type="Gene3D" id="2.30.40.10">
    <property type="entry name" value="Urease, subunit C, domain 1"/>
    <property type="match status" value="1"/>
</dbReference>
<dbReference type="InterPro" id="IPR006680">
    <property type="entry name" value="Amidohydro-rel"/>
</dbReference>
<dbReference type="InterPro" id="IPR011778">
    <property type="entry name" value="Hydantoinase/dihydroPyrase"/>
</dbReference>
<dbReference type="InterPro" id="IPR011059">
    <property type="entry name" value="Metal-dep_hydrolase_composite"/>
</dbReference>
<dbReference type="InterPro" id="IPR032466">
    <property type="entry name" value="Metal_Hydrolase"/>
</dbReference>
<dbReference type="InterPro" id="IPR050378">
    <property type="entry name" value="Metallo-dep_Hydrolases_sf"/>
</dbReference>
<dbReference type="NCBIfam" id="TIGR02033">
    <property type="entry name" value="D-hydantoinase"/>
    <property type="match status" value="1"/>
</dbReference>
<dbReference type="PANTHER" id="PTHR11647:SF54">
    <property type="entry name" value="DIHYDROPYRIMIDINASE-RELATED PROTEIN 1"/>
    <property type="match status" value="1"/>
</dbReference>
<dbReference type="PANTHER" id="PTHR11647">
    <property type="entry name" value="HYDRANTOINASE/DIHYDROPYRIMIDINASE FAMILY MEMBER"/>
    <property type="match status" value="1"/>
</dbReference>
<dbReference type="Pfam" id="PF01979">
    <property type="entry name" value="Amidohydro_1"/>
    <property type="match status" value="1"/>
</dbReference>
<dbReference type="SUPFAM" id="SSF51338">
    <property type="entry name" value="Composite domain of metallo-dependent hydrolases"/>
    <property type="match status" value="2"/>
</dbReference>
<dbReference type="SUPFAM" id="SSF51556">
    <property type="entry name" value="Metallo-dependent hydrolases"/>
    <property type="match status" value="1"/>
</dbReference>
<reference key="1">
    <citation type="journal article" date="1997" name="Mamm. Genome">
        <title>Cloning and characterization of the mouse collapsin response mediator protein-1, Crmp1.</title>
        <authorList>
            <person name="Cohen-Salmon M."/>
            <person name="Crozet F."/>
            <person name="Rebillard G."/>
            <person name="Petit C."/>
        </authorList>
    </citation>
    <scope>NUCLEOTIDE SEQUENCE [MRNA]</scope>
</reference>
<reference key="2">
    <citation type="journal article" date="1998" name="Eur. J. Biochem.">
        <title>The Ulip family phosphoproteins -- common and specific properties.</title>
        <authorList>
            <person name="Byk T."/>
            <person name="Ozon S."/>
            <person name="Sobel A."/>
        </authorList>
    </citation>
    <scope>NUCLEOTIDE SEQUENCE [MRNA]</scope>
    <source>
        <strain>ICR</strain>
        <tissue>Brain</tissue>
    </source>
</reference>
<reference key="3">
    <citation type="submission" date="1997-08" db="EMBL/GenBank/DDBJ databases">
        <authorList>
            <person name="Hamajima N."/>
            <person name="Kato Y."/>
            <person name="Kouwaki M."/>
            <person name="Wada Y."/>
            <person name="Sasaski M."/>
            <person name="Nonaka M."/>
        </authorList>
    </citation>
    <scope>NUCLEOTIDE SEQUENCE [MRNA]</scope>
    <source>
        <tissue>Embryo</tissue>
    </source>
</reference>
<reference key="4">
    <citation type="journal article" date="2004" name="Genome Res.">
        <title>The status, quality, and expansion of the NIH full-length cDNA project: the Mammalian Gene Collection (MGC).</title>
        <authorList>
            <consortium name="The MGC Project Team"/>
        </authorList>
    </citation>
    <scope>NUCLEOTIDE SEQUENCE [LARGE SCALE MRNA]</scope>
    <source>
        <strain>C57BL/6J</strain>
        <tissue>Retina</tissue>
    </source>
</reference>
<reference key="5">
    <citation type="submission" date="2009-01" db="UniProtKB">
        <authorList>
            <person name="Lubec G."/>
            <person name="Klug S."/>
            <person name="Sunyer B."/>
            <person name="Chen W.-Q."/>
        </authorList>
    </citation>
    <scope>PROTEIN SEQUENCE OF 44-56; 150-159; 190-210; 246-254; 259-268; 346-361; 391-397; 401-416; 452-463 AND 472-481</scope>
    <scope>IDENTIFICATION BY MASS SPECTROMETRY</scope>
    <source>
        <strain>OF1</strain>
        <tissue>Hippocampus</tissue>
    </source>
</reference>
<reference key="6">
    <citation type="journal article" date="2000" name="J. Biol. Chem.">
        <title>Molecular characterization of CRMP5, a novel member of the collapsin response mediator protein family.</title>
        <authorList>
            <person name="Fukada M."/>
            <person name="Watakabe I."/>
            <person name="Yuasa-Kawada J."/>
            <person name="Kawachi H."/>
            <person name="Kuroiwa A."/>
            <person name="Matsuda Y."/>
            <person name="Noda M."/>
        </authorList>
    </citation>
    <scope>SUBUNIT</scope>
</reference>
<reference key="7">
    <citation type="journal article" date="2004" name="Mol. Cell. Proteomics">
        <title>Phosphoproteomic analysis of the developing mouse brain.</title>
        <authorList>
            <person name="Ballif B.A."/>
            <person name="Villen J."/>
            <person name="Beausoleil S.A."/>
            <person name="Schwartz D."/>
            <person name="Gygi S.P."/>
        </authorList>
    </citation>
    <scope>PHOSPHORYLATION [LARGE SCALE ANALYSIS] AT THR-509</scope>
    <scope>IDENTIFICATION BY MASS SPECTROMETRY [LARGE SCALE ANALYSIS]</scope>
    <source>
        <tissue>Embryonic brain</tissue>
    </source>
</reference>
<reference key="8">
    <citation type="journal article" date="2006" name="Biochemistry">
        <title>Endogenously nitrated proteins in mouse brain: links to neurodegenerative disease.</title>
        <authorList>
            <person name="Sacksteder C.A."/>
            <person name="Qian W.-J."/>
            <person name="Knyushko T.V."/>
            <person name="Wang H."/>
            <person name="Chin M.H."/>
            <person name="Lacan G."/>
            <person name="Melega W.P."/>
            <person name="Camp D.G. II"/>
            <person name="Smith R.D."/>
            <person name="Smith D.J."/>
            <person name="Squier T.C."/>
            <person name="Bigelow D.J."/>
        </authorList>
    </citation>
    <scope>NITRATION [LARGE SCALE ANALYSIS] AT TYR-316</scope>
    <scope>IDENTIFICATION BY MASS SPECTROMETRY [LARGE SCALE ANALYSIS]</scope>
    <source>
        <tissue>Brain</tissue>
    </source>
</reference>
<reference key="9">
    <citation type="journal article" date="2008" name="J. Proteome Res.">
        <title>Large-scale identification and evolution indexing of tyrosine phosphorylation sites from murine brain.</title>
        <authorList>
            <person name="Ballif B.A."/>
            <person name="Carey G.R."/>
            <person name="Sunyaev S.R."/>
            <person name="Gygi S.P."/>
        </authorList>
    </citation>
    <scope>PHOSPHORYLATION [LARGE SCALE ANALYSIS] AT TYR-504 AND THR-509</scope>
    <scope>IDENTIFICATION BY MASS SPECTROMETRY [LARGE SCALE ANALYSIS]</scope>
    <source>
        <tissue>Brain</tissue>
    </source>
</reference>
<reference key="10">
    <citation type="journal article" date="2010" name="Cell">
        <title>A tissue-specific atlas of mouse protein phosphorylation and expression.</title>
        <authorList>
            <person name="Huttlin E.L."/>
            <person name="Jedrychowski M.P."/>
            <person name="Elias J.E."/>
            <person name="Goswami T."/>
            <person name="Rad R."/>
            <person name="Beausoleil S.A."/>
            <person name="Villen J."/>
            <person name="Haas W."/>
            <person name="Sowa M.E."/>
            <person name="Gygi S.P."/>
        </authorList>
    </citation>
    <scope>PHOSPHORYLATION [LARGE SCALE ANALYSIS] AT THR-509; SER-537; SER-540 AND SER-542</scope>
    <scope>IDENTIFICATION BY MASS SPECTROMETRY [LARGE SCALE ANALYSIS]</scope>
    <source>
        <tissue>Brain</tissue>
        <tissue>Liver</tissue>
    </source>
</reference>
<reference key="11">
    <citation type="journal article" date="2014" name="Nat. Commun.">
        <title>Amino- and carboxyl-terminal domains of Filamin-A interact with CRMP1 to mediate Sema3A signalling.</title>
        <authorList>
            <person name="Nakamura F."/>
            <person name="Kumeta K."/>
            <person name="Hida T."/>
            <person name="Isono T."/>
            <person name="Nakayama Y."/>
            <person name="Kuramata-Matsuoka E."/>
            <person name="Yamashita N."/>
            <person name="Uchida Y."/>
            <person name="Ogura K."/>
            <person name="Gengyo-Ando K."/>
            <person name="Mitani S."/>
            <person name="Ogino T."/>
            <person name="Goshima Y."/>
        </authorList>
    </citation>
    <scope>FUNCTION</scope>
    <scope>SUBCELLULAR LOCATION</scope>
    <scope>DEVELOPMENTAL STAGE</scope>
</reference>
<reference key="12">
    <citation type="journal article" date="2004" name="EMBO J.">
        <title>Structural bases for CRMP function in plexin-dependent semaphorin3A signaling.</title>
        <authorList>
            <person name="Deo R.C."/>
            <person name="Schmidt E.F."/>
            <person name="Elhabazi A."/>
            <person name="Togashi H."/>
            <person name="Burley S.K."/>
            <person name="Strittmatter S.M."/>
        </authorList>
    </citation>
    <scope>X-RAY CRYSTALLOGRAPHY (2.12 ANGSTROMS) OF 8-525</scope>
    <scope>FUNCTION</scope>
    <scope>INTERACTION WITH PLEXA1</scope>
    <scope>SUBUNIT</scope>
</reference>
<name>DPYL1_MOUSE</name>
<feature type="chain" id="PRO_0000165910" description="Dihydropyrimidinase-related protein 1">
    <location>
        <begin position="1"/>
        <end position="572"/>
    </location>
</feature>
<feature type="region of interest" description="Disordered" evidence="3">
    <location>
        <begin position="509"/>
        <end position="572"/>
    </location>
</feature>
<feature type="short sequence motif" description="Required for interaction with FLNA" evidence="1">
    <location>
        <begin position="246"/>
        <end position="247"/>
    </location>
</feature>
<feature type="compositionally biased region" description="Low complexity" evidence="3">
    <location>
        <begin position="509"/>
        <end position="525"/>
    </location>
</feature>
<feature type="compositionally biased region" description="Polar residues" evidence="3">
    <location>
        <begin position="534"/>
        <end position="543"/>
    </location>
</feature>
<feature type="modified residue" description="Phosphoserine" evidence="2">
    <location>
        <position position="8"/>
    </location>
</feature>
<feature type="modified residue" description="Phosphothreonine; by AURKA" evidence="1">
    <location>
        <position position="101"/>
    </location>
</feature>
<feature type="modified residue" description="Phosphothreonine; by AURKA" evidence="1">
    <location>
        <position position="102"/>
    </location>
</feature>
<feature type="modified residue" description="3'-nitrotyrosine" evidence="9">
    <location>
        <position position="316"/>
    </location>
</feature>
<feature type="modified residue" description="Phosphotyrosine" evidence="10">
    <location>
        <position position="504"/>
    </location>
</feature>
<feature type="modified residue" description="Phosphothreonine" evidence="8 10 11">
    <location>
        <position position="509"/>
    </location>
</feature>
<feature type="modified residue" description="Phosphoserine" evidence="2">
    <location>
        <position position="521"/>
    </location>
</feature>
<feature type="modified residue" description="Phosphoserine" evidence="2">
    <location>
        <position position="522"/>
    </location>
</feature>
<feature type="modified residue" description="Phosphoserine" evidence="11">
    <location>
        <position position="537"/>
    </location>
</feature>
<feature type="modified residue" description="Phosphoserine" evidence="11">
    <location>
        <position position="540"/>
    </location>
</feature>
<feature type="modified residue" description="Phosphoserine" evidence="11">
    <location>
        <position position="542"/>
    </location>
</feature>
<feature type="sequence conflict" description="In Ref. 2; CAA70300." evidence="7" ref="2">
    <original>T</original>
    <variation>I</variation>
    <location>
        <position position="338"/>
    </location>
</feature>
<feature type="sequence conflict" description="In Ref. 3; BAA21887." evidence="7" ref="3">
    <original>E</original>
    <variation>K</variation>
    <location>
        <position position="476"/>
    </location>
</feature>
<feature type="sequence conflict" description="In Ref. 3; BAA21887." evidence="7" ref="3">
    <original>F</original>
    <variation>S</variation>
    <location>
        <position position="489"/>
    </location>
</feature>
<feature type="sequence conflict" description="In Ref. 2; CAA70300." evidence="7" ref="2">
    <original>K</original>
    <variation>E</variation>
    <location>
        <position position="520"/>
    </location>
</feature>
<feature type="strand" evidence="12">
    <location>
        <begin position="17"/>
        <end position="21"/>
    </location>
</feature>
<feature type="strand" evidence="12">
    <location>
        <begin position="23"/>
        <end position="25"/>
    </location>
</feature>
<feature type="strand" evidence="12">
    <location>
        <begin position="30"/>
        <end position="32"/>
    </location>
</feature>
<feature type="strand" evidence="12">
    <location>
        <begin position="34"/>
        <end position="38"/>
    </location>
</feature>
<feature type="strand" evidence="12">
    <location>
        <begin position="41"/>
        <end position="48"/>
    </location>
</feature>
<feature type="strand" evidence="12">
    <location>
        <begin position="56"/>
        <end position="59"/>
    </location>
</feature>
<feature type="strand" evidence="12">
    <location>
        <begin position="64"/>
        <end position="67"/>
    </location>
</feature>
<feature type="strand" evidence="12">
    <location>
        <begin position="69"/>
        <end position="74"/>
    </location>
</feature>
<feature type="helix" evidence="12">
    <location>
        <begin position="89"/>
        <end position="98"/>
    </location>
</feature>
<feature type="strand" evidence="12">
    <location>
        <begin position="101"/>
        <end position="108"/>
    </location>
</feature>
<feature type="helix" evidence="12">
    <location>
        <begin position="116"/>
        <end position="130"/>
    </location>
</feature>
<feature type="strand" evidence="12">
    <location>
        <begin position="132"/>
        <end position="141"/>
    </location>
</feature>
<feature type="helix" evidence="12">
    <location>
        <begin position="148"/>
        <end position="157"/>
    </location>
</feature>
<feature type="strand" evidence="12">
    <location>
        <begin position="163"/>
        <end position="168"/>
    </location>
</feature>
<feature type="turn" evidence="12">
    <location>
        <begin position="171"/>
        <end position="174"/>
    </location>
</feature>
<feature type="helix" evidence="12">
    <location>
        <begin position="178"/>
        <end position="190"/>
    </location>
</feature>
<feature type="strand" evidence="12">
    <location>
        <begin position="194"/>
        <end position="198"/>
    </location>
</feature>
<feature type="helix" evidence="12">
    <location>
        <begin position="202"/>
        <end position="214"/>
    </location>
</feature>
<feature type="helix" evidence="12">
    <location>
        <begin position="221"/>
        <end position="226"/>
    </location>
</feature>
<feature type="helix" evidence="12">
    <location>
        <begin position="230"/>
        <end position="246"/>
    </location>
</feature>
<feature type="strand" evidence="12">
    <location>
        <begin position="250"/>
        <end position="255"/>
    </location>
</feature>
<feature type="helix" evidence="12">
    <location>
        <begin position="258"/>
        <end position="270"/>
    </location>
</feature>
<feature type="strand" evidence="12">
    <location>
        <begin position="274"/>
        <end position="279"/>
    </location>
</feature>
<feature type="helix" evidence="12">
    <location>
        <begin position="280"/>
        <end position="284"/>
    </location>
</feature>
<feature type="helix" evidence="12">
    <location>
        <begin position="287"/>
        <end position="291"/>
    </location>
</feature>
<feature type="helix" evidence="12">
    <location>
        <begin position="295"/>
        <end position="300"/>
    </location>
</feature>
<feature type="helix" evidence="12">
    <location>
        <begin position="313"/>
        <end position="322"/>
    </location>
</feature>
<feature type="helix" evidence="12">
    <location>
        <begin position="338"/>
        <end position="341"/>
    </location>
</feature>
<feature type="helix" evidence="12">
    <location>
        <begin position="342"/>
        <end position="344"/>
    </location>
</feature>
<feature type="helix" evidence="12">
    <location>
        <begin position="348"/>
        <end position="350"/>
    </location>
</feature>
<feature type="turn" evidence="12">
    <location>
        <begin position="358"/>
        <end position="360"/>
    </location>
</feature>
<feature type="helix" evidence="12">
    <location>
        <begin position="361"/>
        <end position="369"/>
    </location>
</feature>
<feature type="turn" evidence="12">
    <location>
        <begin position="370"/>
        <end position="373"/>
    </location>
</feature>
<feature type="helix" evidence="12">
    <location>
        <begin position="377"/>
        <end position="384"/>
    </location>
</feature>
<feature type="helix" evidence="12">
    <location>
        <begin position="386"/>
        <end position="391"/>
    </location>
</feature>
<feature type="turn" evidence="12">
    <location>
        <begin position="395"/>
        <end position="397"/>
    </location>
</feature>
<feature type="strand" evidence="12">
    <location>
        <begin position="409"/>
        <end position="419"/>
    </location>
</feature>
<feature type="turn" evidence="12">
    <location>
        <begin position="422"/>
        <end position="424"/>
    </location>
</feature>
<feature type="strand" evidence="12">
    <location>
        <begin position="426"/>
        <end position="430"/>
    </location>
</feature>
<feature type="turn" evidence="12">
    <location>
        <begin position="433"/>
        <end position="436"/>
    </location>
</feature>
<feature type="strand" evidence="12">
    <location>
        <begin position="438"/>
        <end position="448"/>
    </location>
</feature>
<feature type="strand" evidence="12">
    <location>
        <begin position="451"/>
        <end position="455"/>
    </location>
</feature>
<feature type="helix" evidence="12">
    <location>
        <begin position="476"/>
        <end position="488"/>
    </location>
</feature>
<keyword id="KW-0002">3D-structure</keyword>
<keyword id="KW-0966">Cell projection</keyword>
<keyword id="KW-0963">Cytoplasm</keyword>
<keyword id="KW-0206">Cytoskeleton</keyword>
<keyword id="KW-0903">Direct protein sequencing</keyword>
<keyword id="KW-0944">Nitration</keyword>
<keyword id="KW-0597">Phosphoprotein</keyword>
<keyword id="KW-1185">Reference proteome</keyword>
<evidence type="ECO:0000250" key="1">
    <source>
        <dbReference type="UniProtKB" id="Q14194"/>
    </source>
</evidence>
<evidence type="ECO:0000250" key="2">
    <source>
        <dbReference type="UniProtKB" id="Q62950"/>
    </source>
</evidence>
<evidence type="ECO:0000256" key="3">
    <source>
        <dbReference type="SAM" id="MobiDB-lite"/>
    </source>
</evidence>
<evidence type="ECO:0000269" key="4">
    <source>
    </source>
</evidence>
<evidence type="ECO:0000269" key="5">
    <source>
    </source>
</evidence>
<evidence type="ECO:0000269" key="6">
    <source>
    </source>
</evidence>
<evidence type="ECO:0000305" key="7"/>
<evidence type="ECO:0007744" key="8">
    <source>
    </source>
</evidence>
<evidence type="ECO:0007744" key="9">
    <source>
    </source>
</evidence>
<evidence type="ECO:0007744" key="10">
    <source>
    </source>
</evidence>
<evidence type="ECO:0007744" key="11">
    <source>
    </source>
</evidence>
<evidence type="ECO:0007829" key="12">
    <source>
        <dbReference type="PDB" id="1KCX"/>
    </source>
</evidence>
<accession>P97427</accession>
<accession>O08554</accession>
<accession>O35097</accession>
<comment type="function">
    <text evidence="1 5 6">Necessary for signaling by class 3 semaphorins and subsequent remodeling of the cytoskeleton (PubMed:14685275, PubMed:25358863). Plays a role in axon guidance (PubMed:14685275). During the axon guidance process, acts downstream of SEMA3A to promote FLNA dissociation from F-actin which results in the rearrangement of the actin cytoskeleton and the collapse of the growth cone (PubMed:25358863). Involved in invasive growth and cell migration (By similarity). May participate in cytokinesis (By similarity).</text>
</comment>
<comment type="subunit">
    <text evidence="1 4 5">Homotetramer, and heterotetramer with DPYSL2, DPYSL3, DPYSL4 or DPYSL5 (PubMed:10956643, PubMed:14685275). Interacts with PLXNA1 (PubMed:14685275). Interacts with FLNA (via calponin-homology (CH) domain 1 and filamin repeat 24); the interaction alters FLNA ternary structure and thus promotes FLNA dissociation from F-actin (By similarity).</text>
</comment>
<comment type="subcellular location">
    <subcellularLocation>
        <location evidence="1">Cytoplasm</location>
    </subcellularLocation>
    <subcellularLocation>
        <location evidence="1">Cytoplasm</location>
        <location evidence="1">Cytoskeleton</location>
        <location evidence="1">Microtubule organizing center</location>
        <location evidence="1">Centrosome</location>
    </subcellularLocation>
    <subcellularLocation>
        <location evidence="1">Cytoplasm</location>
        <location evidence="1">Cytoskeleton</location>
        <location evidence="1">Spindle</location>
    </subcellularLocation>
    <subcellularLocation>
        <location evidence="6">Cell projection</location>
        <location evidence="6">Growth cone</location>
    </subcellularLocation>
    <subcellularLocation>
        <location evidence="6">Cytoplasm</location>
        <location evidence="6">Cytoskeleton</location>
    </subcellularLocation>
    <subcellularLocation>
        <location evidence="5">Perikaryon</location>
    </subcellularLocation>
    <text evidence="1 6">Associated with centrosomes and the mitotic spindle during metaphase (By similarity). Colocalizes with FLNA and tubulin in the central region of DRG neuron growth cone (PubMed:25358863). Following SEMA3A stimulation of DRG neurons, colocalizes with F-actin (PubMed:25358863).</text>
</comment>
<comment type="developmental stage">
    <text evidence="6">Expressed in DRG neurons of 12 dpc embryos.</text>
</comment>
<comment type="PTM">
    <text evidence="1">Phosphorylation at Ser-522 enhances CRMP1-mediated alteration of FLNA ternary structure and FLNA dissociation from F-actin.</text>
</comment>
<comment type="similarity">
    <text evidence="7">Belongs to the metallo-dependent hydrolases superfamily. Hydantoinase/dihydropyrimidinase family.</text>
</comment>
<comment type="caution">
    <text evidence="7">Lacks most of the conserved residues that are essential for binding the metal cofactor and hence for dihydropyrimidinase activity. Its enzyme activity is therefore unsure.</text>
</comment>